<evidence type="ECO:0000255" key="1">
    <source>
        <dbReference type="HAMAP-Rule" id="MF_03144"/>
    </source>
</evidence>
<organism>
    <name type="scientific">Culex quinquefasciatus</name>
    <name type="common">Southern house mosquito</name>
    <name type="synonym">Culex pungens</name>
    <dbReference type="NCBI Taxonomy" id="7176"/>
    <lineage>
        <taxon>Eukaryota</taxon>
        <taxon>Metazoa</taxon>
        <taxon>Ecdysozoa</taxon>
        <taxon>Arthropoda</taxon>
        <taxon>Hexapoda</taxon>
        <taxon>Insecta</taxon>
        <taxon>Pterygota</taxon>
        <taxon>Neoptera</taxon>
        <taxon>Endopterygota</taxon>
        <taxon>Diptera</taxon>
        <taxon>Nematocera</taxon>
        <taxon>Culicoidea</taxon>
        <taxon>Culicidae</taxon>
        <taxon>Culicinae</taxon>
        <taxon>Culicini</taxon>
        <taxon>Culex</taxon>
        <taxon>Culex</taxon>
    </lineage>
</organism>
<proteinExistence type="inferred from homology"/>
<sequence>MVVRDYNTELTYIERISTNSFRIKKGFQPNMNVEGIFYANSRLEKLMFDELRNSCRPGMTGGFLPGVKQIANVAALPGIVGRSVGLPDIHSGYGFAIGNMAAFDMSDPTSIVSPGGVGFDINCGVRLLRTNLFEKDVKPVQEQLAQSLFDHIPVGVGSKGIIPMNAHDLEEALEMGMDWSLREGYVWAEDKEHCEEYGRMLTADPSKVSMRAKKRGLPQLGTLGAGNHYAEIQVVEEIYDKYAASKMGIEELGQICVMIHSGSRGFGHQVATDALVEMEKAMKRDKIETNDRQLACARINSVEGQNYLKAMSAAANFAWVNRSSMTFLTRQAFAKQFNTTPDDLDMHVIYDVSHNVAKIEEHIVDGRPKQLLVHRKGSTRAFPPHHPLIPVDYQLTGQPVLVGGSMGTCSFVLTGTEKGMAETFGSTCHGAGRSLSRAKSRRNLDYKDVLRDLEAKGISIRVASPKLVQEEAPDSYKDVRDVVQTCHDVGISSKCIKLRPIAVIKG</sequence>
<dbReference type="EC" id="6.5.1.8" evidence="1"/>
<dbReference type="EMBL" id="DS231890">
    <property type="protein sequence ID" value="EDS43815.1"/>
    <property type="molecule type" value="Genomic_DNA"/>
</dbReference>
<dbReference type="SMR" id="B0WCT9"/>
<dbReference type="FunCoup" id="B0WCT9">
    <property type="interactions" value="1568"/>
</dbReference>
<dbReference type="STRING" id="7176.B0WCT9"/>
<dbReference type="EnsemblMetazoa" id="CPIJ004874-RA">
    <property type="protein sequence ID" value="CPIJ004874-PA"/>
    <property type="gene ID" value="CPIJ004874"/>
</dbReference>
<dbReference type="EnsemblMetazoa" id="CQUJHB017199.R26541">
    <property type="protein sequence ID" value="CQUJHB017199.P26541"/>
    <property type="gene ID" value="CQUJHB017199"/>
</dbReference>
<dbReference type="EnsemblMetazoa" id="XM_001846471.2">
    <property type="protein sequence ID" value="XP_001846523.1"/>
    <property type="gene ID" value="LOC6036473"/>
</dbReference>
<dbReference type="KEGG" id="cqu:CpipJ_CPIJ004874"/>
<dbReference type="CTD" id="51493"/>
<dbReference type="VEuPathDB" id="VectorBase:CPIJ004874"/>
<dbReference type="VEuPathDB" id="VectorBase:CQUJHB017199"/>
<dbReference type="eggNOG" id="KOG3833">
    <property type="taxonomic scope" value="Eukaryota"/>
</dbReference>
<dbReference type="HOGENOM" id="CLU_022279_0_0_1"/>
<dbReference type="InParanoid" id="B0WCT9"/>
<dbReference type="OMA" id="QTRGVEC"/>
<dbReference type="OrthoDB" id="10249697at2759"/>
<dbReference type="PhylomeDB" id="B0WCT9"/>
<dbReference type="Proteomes" id="UP000002320">
    <property type="component" value="Unassembled WGS sequence"/>
</dbReference>
<dbReference type="GO" id="GO:0005634">
    <property type="term" value="C:nucleus"/>
    <property type="evidence" value="ECO:0007669"/>
    <property type="project" value="TreeGrafter"/>
</dbReference>
<dbReference type="GO" id="GO:0072669">
    <property type="term" value="C:tRNA-splicing ligase complex"/>
    <property type="evidence" value="ECO:0007669"/>
    <property type="project" value="UniProtKB-UniRule"/>
</dbReference>
<dbReference type="GO" id="GO:0005525">
    <property type="term" value="F:GTP binding"/>
    <property type="evidence" value="ECO:0007669"/>
    <property type="project" value="UniProtKB-KW"/>
</dbReference>
<dbReference type="GO" id="GO:0046872">
    <property type="term" value="F:metal ion binding"/>
    <property type="evidence" value="ECO:0007669"/>
    <property type="project" value="UniProtKB-KW"/>
</dbReference>
<dbReference type="GO" id="GO:0003972">
    <property type="term" value="F:RNA ligase (ATP) activity"/>
    <property type="evidence" value="ECO:0007669"/>
    <property type="project" value="TreeGrafter"/>
</dbReference>
<dbReference type="GO" id="GO:0170057">
    <property type="term" value="F:RNA ligase (GTP) activity"/>
    <property type="evidence" value="ECO:0007669"/>
    <property type="project" value="UniProtKB-EC"/>
</dbReference>
<dbReference type="GO" id="GO:0006388">
    <property type="term" value="P:tRNA splicing, via endonucleolytic cleavage and ligation"/>
    <property type="evidence" value="ECO:0007669"/>
    <property type="project" value="UniProtKB-UniRule"/>
</dbReference>
<dbReference type="FunFam" id="3.90.1860.10:FF:000001">
    <property type="entry name" value="tRNA-splicing ligase RtcB homolog"/>
    <property type="match status" value="1"/>
</dbReference>
<dbReference type="Gene3D" id="3.90.1860.10">
    <property type="entry name" value="tRNA-splicing ligase RtcB"/>
    <property type="match status" value="1"/>
</dbReference>
<dbReference type="HAMAP" id="MF_03144">
    <property type="entry name" value="RtcB_euk"/>
    <property type="match status" value="1"/>
</dbReference>
<dbReference type="InterPro" id="IPR001233">
    <property type="entry name" value="RtcB"/>
</dbReference>
<dbReference type="InterPro" id="IPR036025">
    <property type="entry name" value="RtcB-like_sf"/>
</dbReference>
<dbReference type="InterPro" id="IPR027513">
    <property type="entry name" value="RtcB_euk"/>
</dbReference>
<dbReference type="PANTHER" id="PTHR11118">
    <property type="entry name" value="RNA-SPLICING LIGASE RTCB HOMOLOG"/>
    <property type="match status" value="1"/>
</dbReference>
<dbReference type="PANTHER" id="PTHR11118:SF1">
    <property type="entry name" value="RNA-SPLICING LIGASE RTCB HOMOLOG"/>
    <property type="match status" value="1"/>
</dbReference>
<dbReference type="Pfam" id="PF01139">
    <property type="entry name" value="RtcB"/>
    <property type="match status" value="1"/>
</dbReference>
<dbReference type="SUPFAM" id="SSF103365">
    <property type="entry name" value="Hypothetical protein PH1602"/>
    <property type="match status" value="1"/>
</dbReference>
<dbReference type="PROSITE" id="PS01288">
    <property type="entry name" value="UPF0027"/>
    <property type="match status" value="1"/>
</dbReference>
<accession>B0WCT9</accession>
<protein>
    <recommendedName>
        <fullName evidence="1">RNA-splicing ligase RtcB homolog 1</fullName>
        <ecNumber evidence="1">6.5.1.8</ecNumber>
    </recommendedName>
    <alternativeName>
        <fullName evidence="1">3'-phosphate/5'-hydroxy nucleic acid ligase 1</fullName>
    </alternativeName>
</protein>
<feature type="chain" id="PRO_0000407224" description="RNA-splicing ligase RtcB homolog 1">
    <location>
        <begin position="1"/>
        <end position="506"/>
    </location>
</feature>
<feature type="active site" description="GMP-histidine intermediate" evidence="1">
    <location>
        <position position="429"/>
    </location>
</feature>
<feature type="binding site" evidence="1">
    <location>
        <position position="120"/>
    </location>
    <ligand>
        <name>Mn(2+)</name>
        <dbReference type="ChEBI" id="CHEBI:29035"/>
        <label>1</label>
    </ligand>
</feature>
<feature type="binding site" evidence="1">
    <location>
        <position position="123"/>
    </location>
    <ligand>
        <name>Mn(2+)</name>
        <dbReference type="ChEBI" id="CHEBI:29035"/>
        <label>1</label>
    </ligand>
</feature>
<feature type="binding site" evidence="1">
    <location>
        <position position="123"/>
    </location>
    <ligand>
        <name>Mn(2+)</name>
        <dbReference type="ChEBI" id="CHEBI:29035"/>
        <label>2</label>
    </ligand>
</feature>
<feature type="binding site" evidence="1">
    <location>
        <begin position="227"/>
        <end position="231"/>
    </location>
    <ligand>
        <name>GMP</name>
        <dbReference type="ChEBI" id="CHEBI:58115"/>
    </ligand>
</feature>
<feature type="binding site" evidence="1">
    <location>
        <position position="228"/>
    </location>
    <ligand>
        <name>Mn(2+)</name>
        <dbReference type="ChEBI" id="CHEBI:29035"/>
        <label>1</label>
    </ligand>
</feature>
<feature type="binding site" evidence="1">
    <location>
        <position position="260"/>
    </location>
    <ligand>
        <name>Mn(2+)</name>
        <dbReference type="ChEBI" id="CHEBI:29035"/>
        <label>2</label>
    </ligand>
</feature>
<feature type="binding site" evidence="1">
    <location>
        <begin position="354"/>
        <end position="355"/>
    </location>
    <ligand>
        <name>GMP</name>
        <dbReference type="ChEBI" id="CHEBI:58115"/>
    </ligand>
</feature>
<feature type="binding site" evidence="1">
    <location>
        <position position="354"/>
    </location>
    <ligand>
        <name>Mn(2+)</name>
        <dbReference type="ChEBI" id="CHEBI:29035"/>
        <label>2</label>
    </ligand>
</feature>
<feature type="binding site" evidence="1">
    <location>
        <begin position="403"/>
        <end position="406"/>
    </location>
    <ligand>
        <name>GMP</name>
        <dbReference type="ChEBI" id="CHEBI:58115"/>
    </ligand>
</feature>
<feature type="binding site" evidence="1">
    <location>
        <position position="410"/>
    </location>
    <ligand>
        <name>GMP</name>
        <dbReference type="ChEBI" id="CHEBI:58115"/>
    </ligand>
</feature>
<feature type="binding site" evidence="1">
    <location>
        <begin position="429"/>
        <end position="432"/>
    </location>
    <ligand>
        <name>GMP</name>
        <dbReference type="ChEBI" id="CHEBI:58115"/>
    </ligand>
</feature>
<feature type="binding site" evidence="1">
    <location>
        <position position="505"/>
    </location>
    <ligand>
        <name>GMP</name>
        <dbReference type="ChEBI" id="CHEBI:58115"/>
    </ligand>
</feature>
<gene>
    <name type="ORF">CPIJ004874</name>
</gene>
<comment type="function">
    <text evidence="1">Catalytic subunit of the tRNA-splicing ligase complex that acts by directly joining spliced tRNA halves to mature-sized tRNAs by incorporating the precursor-derived splice junction phosphate into the mature tRNA as a canonical 3',5'-phosphodiester. May act as an RNA ligase with broad substrate specificity, and may function toward other RNAs.</text>
</comment>
<comment type="catalytic activity">
    <reaction evidence="1">
        <text>a 3'-end 3'-phospho-ribonucleotide-RNA + a 5'-end dephospho-ribonucleoside-RNA + GTP = a ribonucleotidyl-ribonucleotide-RNA + GMP + diphosphate</text>
        <dbReference type="Rhea" id="RHEA:68076"/>
        <dbReference type="Rhea" id="RHEA-COMP:10463"/>
        <dbReference type="Rhea" id="RHEA-COMP:13936"/>
        <dbReference type="Rhea" id="RHEA-COMP:17355"/>
        <dbReference type="ChEBI" id="CHEBI:33019"/>
        <dbReference type="ChEBI" id="CHEBI:37565"/>
        <dbReference type="ChEBI" id="CHEBI:58115"/>
        <dbReference type="ChEBI" id="CHEBI:83062"/>
        <dbReference type="ChEBI" id="CHEBI:138284"/>
        <dbReference type="ChEBI" id="CHEBI:173118"/>
        <dbReference type="EC" id="6.5.1.8"/>
    </reaction>
</comment>
<comment type="catalytic activity">
    <reaction evidence="1">
        <text>a 3'-end 2',3'-cyclophospho-ribonucleotide-RNA + a 5'-end dephospho-ribonucleoside-RNA + GTP + H2O = a ribonucleotidyl-ribonucleotide-RNA + GMP + diphosphate + H(+)</text>
        <dbReference type="Rhea" id="RHEA:68080"/>
        <dbReference type="Rhea" id="RHEA-COMP:10464"/>
        <dbReference type="Rhea" id="RHEA-COMP:13936"/>
        <dbReference type="Rhea" id="RHEA-COMP:17355"/>
        <dbReference type="ChEBI" id="CHEBI:15377"/>
        <dbReference type="ChEBI" id="CHEBI:15378"/>
        <dbReference type="ChEBI" id="CHEBI:33019"/>
        <dbReference type="ChEBI" id="CHEBI:37565"/>
        <dbReference type="ChEBI" id="CHEBI:58115"/>
        <dbReference type="ChEBI" id="CHEBI:83064"/>
        <dbReference type="ChEBI" id="CHEBI:138284"/>
        <dbReference type="ChEBI" id="CHEBI:173118"/>
        <dbReference type="EC" id="6.5.1.8"/>
    </reaction>
</comment>
<comment type="cofactor">
    <cofactor evidence="1">
        <name>Mn(2+)</name>
        <dbReference type="ChEBI" id="CHEBI:29035"/>
    </cofactor>
    <text evidence="1">Binds 2 manganese ions per subunit.</text>
</comment>
<comment type="subunit">
    <text evidence="1">Catalytic component of the tRNA-splicing ligase complex.</text>
</comment>
<comment type="miscellaneous">
    <text evidence="1">Ligation probably proceeds through 3 nucleotidyl transfer steps, with 2',3'-cyclic phosphate termini being hydrolyzed to 3'-P termini in a step that precedes 3'-P activation with GMP. In the first nucleotidyl transfer step, RTCB reacts with GTP to form a covalent RTCB-histidine-GMP intermediate with release of PPi; in the second step, the GMP moiety is transferred to the RNA 3'-P; in the third step, the 5'-OH from the opposite RNA strand attacks the activated 3'-P to form a 3',5'-phosphodiester bond and release GMP.</text>
</comment>
<comment type="similarity">
    <text evidence="1">Belongs to the RtcB family.</text>
</comment>
<reference key="1">
    <citation type="submission" date="2007-03" db="EMBL/GenBank/DDBJ databases">
        <title>Annotation of Culex pipiens quinquefasciatus.</title>
        <authorList>
            <consortium name="The Broad Institute Genome Sequencing Platform"/>
            <person name="Atkinson P.W."/>
            <person name="Hemingway J."/>
            <person name="Christensen B.M."/>
            <person name="Higgs S."/>
            <person name="Kodira C.D."/>
            <person name="Hannick L.I."/>
            <person name="Megy K."/>
            <person name="O'Leary S.B."/>
            <person name="Pearson M."/>
            <person name="Haas B.J."/>
            <person name="Mauceli E."/>
            <person name="Wortman J.R."/>
            <person name="Lee N.H."/>
            <person name="Guigo R."/>
            <person name="Stanke M."/>
            <person name="Alvarado L."/>
            <person name="Amedeo P."/>
            <person name="Antoine C.H."/>
            <person name="Arensburger P."/>
            <person name="Bidwell S.L."/>
            <person name="Crawford M."/>
            <person name="Camaro F."/>
            <person name="Devon K."/>
            <person name="Engels R."/>
            <person name="Hammond M."/>
            <person name="Howarth C."/>
            <person name="Koehrsen M."/>
            <person name="Lawson D."/>
            <person name="Montgomery P."/>
            <person name="Nene V."/>
            <person name="Nusbaum C."/>
            <person name="Puiu D."/>
            <person name="Romero-Severson J."/>
            <person name="Severson D.W."/>
            <person name="Shumway M."/>
            <person name="Sisk P."/>
            <person name="Stolte C."/>
            <person name="Zeng Q."/>
            <person name="Eisenstadt E."/>
            <person name="Fraser-Liggett C.M."/>
            <person name="Strausberg R."/>
            <person name="Galagan J."/>
            <person name="Birren B."/>
            <person name="Collins F.H."/>
        </authorList>
    </citation>
    <scope>NUCLEOTIDE SEQUENCE [LARGE SCALE GENOMIC DNA]</scope>
    <source>
        <strain>JHB</strain>
    </source>
</reference>
<name>RTCB1_CULQU</name>
<keyword id="KW-0342">GTP-binding</keyword>
<keyword id="KW-0436">Ligase</keyword>
<keyword id="KW-0464">Manganese</keyword>
<keyword id="KW-0479">Metal-binding</keyword>
<keyword id="KW-0547">Nucleotide-binding</keyword>
<keyword id="KW-1185">Reference proteome</keyword>
<keyword id="KW-0819">tRNA processing</keyword>